<accession>A7HVV8</accession>
<protein>
    <recommendedName>
        <fullName evidence="1">DNA ligase</fullName>
        <ecNumber evidence="1">6.5.1.2</ecNumber>
    </recommendedName>
    <alternativeName>
        <fullName evidence="1">Polydeoxyribonucleotide synthase [NAD(+)]</fullName>
    </alternativeName>
</protein>
<proteinExistence type="inferred from homology"/>
<dbReference type="EC" id="6.5.1.2" evidence="1"/>
<dbReference type="EMBL" id="CP000774">
    <property type="protein sequence ID" value="ABS64041.1"/>
    <property type="molecule type" value="Genomic_DNA"/>
</dbReference>
<dbReference type="RefSeq" id="WP_012111350.1">
    <property type="nucleotide sequence ID" value="NC_009719.1"/>
</dbReference>
<dbReference type="SMR" id="A7HVV8"/>
<dbReference type="STRING" id="402881.Plav_2432"/>
<dbReference type="KEGG" id="pla:Plav_2432"/>
<dbReference type="eggNOG" id="COG0272">
    <property type="taxonomic scope" value="Bacteria"/>
</dbReference>
<dbReference type="HOGENOM" id="CLU_007764_2_1_5"/>
<dbReference type="OrthoDB" id="9759736at2"/>
<dbReference type="Proteomes" id="UP000006377">
    <property type="component" value="Chromosome"/>
</dbReference>
<dbReference type="GO" id="GO:0005829">
    <property type="term" value="C:cytosol"/>
    <property type="evidence" value="ECO:0007669"/>
    <property type="project" value="TreeGrafter"/>
</dbReference>
<dbReference type="GO" id="GO:0003911">
    <property type="term" value="F:DNA ligase (NAD+) activity"/>
    <property type="evidence" value="ECO:0007669"/>
    <property type="project" value="UniProtKB-UniRule"/>
</dbReference>
<dbReference type="GO" id="GO:0046872">
    <property type="term" value="F:metal ion binding"/>
    <property type="evidence" value="ECO:0007669"/>
    <property type="project" value="UniProtKB-KW"/>
</dbReference>
<dbReference type="GO" id="GO:0006281">
    <property type="term" value="P:DNA repair"/>
    <property type="evidence" value="ECO:0007669"/>
    <property type="project" value="UniProtKB-KW"/>
</dbReference>
<dbReference type="GO" id="GO:0006260">
    <property type="term" value="P:DNA replication"/>
    <property type="evidence" value="ECO:0007669"/>
    <property type="project" value="UniProtKB-KW"/>
</dbReference>
<dbReference type="CDD" id="cd17748">
    <property type="entry name" value="BRCT_DNA_ligase_like"/>
    <property type="match status" value="1"/>
</dbReference>
<dbReference type="CDD" id="cd00114">
    <property type="entry name" value="LIGANc"/>
    <property type="match status" value="1"/>
</dbReference>
<dbReference type="FunFam" id="2.40.50.140:FF:000012">
    <property type="entry name" value="DNA ligase"/>
    <property type="match status" value="1"/>
</dbReference>
<dbReference type="FunFam" id="3.30.470.30:FF:000001">
    <property type="entry name" value="DNA ligase"/>
    <property type="match status" value="1"/>
</dbReference>
<dbReference type="Gene3D" id="6.20.10.30">
    <property type="match status" value="1"/>
</dbReference>
<dbReference type="Gene3D" id="1.10.150.20">
    <property type="entry name" value="5' to 3' exonuclease, C-terminal subdomain"/>
    <property type="match status" value="2"/>
</dbReference>
<dbReference type="Gene3D" id="3.40.50.10190">
    <property type="entry name" value="BRCT domain"/>
    <property type="match status" value="1"/>
</dbReference>
<dbReference type="Gene3D" id="3.30.470.30">
    <property type="entry name" value="DNA ligase/mRNA capping enzyme"/>
    <property type="match status" value="1"/>
</dbReference>
<dbReference type="Gene3D" id="1.10.287.610">
    <property type="entry name" value="Helix hairpin bin"/>
    <property type="match status" value="1"/>
</dbReference>
<dbReference type="Gene3D" id="2.40.50.140">
    <property type="entry name" value="Nucleic acid-binding proteins"/>
    <property type="match status" value="1"/>
</dbReference>
<dbReference type="HAMAP" id="MF_01588">
    <property type="entry name" value="DNA_ligase_A"/>
    <property type="match status" value="1"/>
</dbReference>
<dbReference type="InterPro" id="IPR001357">
    <property type="entry name" value="BRCT_dom"/>
</dbReference>
<dbReference type="InterPro" id="IPR036420">
    <property type="entry name" value="BRCT_dom_sf"/>
</dbReference>
<dbReference type="InterPro" id="IPR041663">
    <property type="entry name" value="DisA/LigA_HHH"/>
</dbReference>
<dbReference type="InterPro" id="IPR001679">
    <property type="entry name" value="DNA_ligase"/>
</dbReference>
<dbReference type="InterPro" id="IPR018239">
    <property type="entry name" value="DNA_ligase_AS"/>
</dbReference>
<dbReference type="InterPro" id="IPR033136">
    <property type="entry name" value="DNA_ligase_CS"/>
</dbReference>
<dbReference type="InterPro" id="IPR013839">
    <property type="entry name" value="DNAligase_adenylation"/>
</dbReference>
<dbReference type="InterPro" id="IPR013840">
    <property type="entry name" value="DNAligase_N"/>
</dbReference>
<dbReference type="InterPro" id="IPR012340">
    <property type="entry name" value="NA-bd_OB-fold"/>
</dbReference>
<dbReference type="InterPro" id="IPR004150">
    <property type="entry name" value="NAD_DNA_ligase_OB"/>
</dbReference>
<dbReference type="InterPro" id="IPR010994">
    <property type="entry name" value="RuvA_2-like"/>
</dbReference>
<dbReference type="InterPro" id="IPR004149">
    <property type="entry name" value="Znf_DNAligase_C4"/>
</dbReference>
<dbReference type="NCBIfam" id="TIGR00575">
    <property type="entry name" value="dnlj"/>
    <property type="match status" value="1"/>
</dbReference>
<dbReference type="NCBIfam" id="NF005932">
    <property type="entry name" value="PRK07956.1"/>
    <property type="match status" value="1"/>
</dbReference>
<dbReference type="PANTHER" id="PTHR23389">
    <property type="entry name" value="CHROMOSOME TRANSMISSION FIDELITY FACTOR 18"/>
    <property type="match status" value="1"/>
</dbReference>
<dbReference type="PANTHER" id="PTHR23389:SF9">
    <property type="entry name" value="DNA LIGASE"/>
    <property type="match status" value="1"/>
</dbReference>
<dbReference type="Pfam" id="PF00533">
    <property type="entry name" value="BRCT"/>
    <property type="match status" value="1"/>
</dbReference>
<dbReference type="Pfam" id="PF01653">
    <property type="entry name" value="DNA_ligase_aden"/>
    <property type="match status" value="1"/>
</dbReference>
<dbReference type="Pfam" id="PF03120">
    <property type="entry name" value="DNA_ligase_OB"/>
    <property type="match status" value="1"/>
</dbReference>
<dbReference type="Pfam" id="PF03119">
    <property type="entry name" value="DNA_ligase_ZBD"/>
    <property type="match status" value="1"/>
</dbReference>
<dbReference type="Pfam" id="PF12826">
    <property type="entry name" value="HHH_2"/>
    <property type="match status" value="1"/>
</dbReference>
<dbReference type="PIRSF" id="PIRSF001604">
    <property type="entry name" value="LigA"/>
    <property type="match status" value="1"/>
</dbReference>
<dbReference type="SMART" id="SM00292">
    <property type="entry name" value="BRCT"/>
    <property type="match status" value="1"/>
</dbReference>
<dbReference type="SMART" id="SM00532">
    <property type="entry name" value="LIGANc"/>
    <property type="match status" value="1"/>
</dbReference>
<dbReference type="SUPFAM" id="SSF52113">
    <property type="entry name" value="BRCT domain"/>
    <property type="match status" value="1"/>
</dbReference>
<dbReference type="SUPFAM" id="SSF56091">
    <property type="entry name" value="DNA ligase/mRNA capping enzyme, catalytic domain"/>
    <property type="match status" value="1"/>
</dbReference>
<dbReference type="SUPFAM" id="SSF50249">
    <property type="entry name" value="Nucleic acid-binding proteins"/>
    <property type="match status" value="1"/>
</dbReference>
<dbReference type="SUPFAM" id="SSF47781">
    <property type="entry name" value="RuvA domain 2-like"/>
    <property type="match status" value="1"/>
</dbReference>
<dbReference type="PROSITE" id="PS50172">
    <property type="entry name" value="BRCT"/>
    <property type="match status" value="1"/>
</dbReference>
<dbReference type="PROSITE" id="PS01055">
    <property type="entry name" value="DNA_LIGASE_N1"/>
    <property type="match status" value="1"/>
</dbReference>
<dbReference type="PROSITE" id="PS01056">
    <property type="entry name" value="DNA_LIGASE_N2"/>
    <property type="match status" value="1"/>
</dbReference>
<comment type="function">
    <text evidence="1">DNA ligase that catalyzes the formation of phosphodiester linkages between 5'-phosphoryl and 3'-hydroxyl groups in double-stranded DNA using NAD as a coenzyme and as the energy source for the reaction. It is essential for DNA replication and repair of damaged DNA.</text>
</comment>
<comment type="catalytic activity">
    <reaction evidence="1">
        <text>NAD(+) + (deoxyribonucleotide)n-3'-hydroxyl + 5'-phospho-(deoxyribonucleotide)m = (deoxyribonucleotide)n+m + AMP + beta-nicotinamide D-nucleotide.</text>
        <dbReference type="EC" id="6.5.1.2"/>
    </reaction>
</comment>
<comment type="cofactor">
    <cofactor evidence="1">
        <name>Mg(2+)</name>
        <dbReference type="ChEBI" id="CHEBI:18420"/>
    </cofactor>
    <cofactor evidence="1">
        <name>Mn(2+)</name>
        <dbReference type="ChEBI" id="CHEBI:29035"/>
    </cofactor>
</comment>
<comment type="similarity">
    <text evidence="1">Belongs to the NAD-dependent DNA ligase family. LigA subfamily.</text>
</comment>
<name>DNLJ_PARL1</name>
<evidence type="ECO:0000255" key="1">
    <source>
        <dbReference type="HAMAP-Rule" id="MF_01588"/>
    </source>
</evidence>
<feature type="chain" id="PRO_0000340362" description="DNA ligase">
    <location>
        <begin position="1"/>
        <end position="710"/>
    </location>
</feature>
<feature type="domain" description="BRCT" evidence="1">
    <location>
        <begin position="633"/>
        <end position="710"/>
    </location>
</feature>
<feature type="active site" description="N6-AMP-lysine intermediate" evidence="1">
    <location>
        <position position="138"/>
    </location>
</feature>
<feature type="binding site" evidence="1">
    <location>
        <begin position="53"/>
        <end position="57"/>
    </location>
    <ligand>
        <name>NAD(+)</name>
        <dbReference type="ChEBI" id="CHEBI:57540"/>
    </ligand>
</feature>
<feature type="binding site" evidence="1">
    <location>
        <begin position="102"/>
        <end position="103"/>
    </location>
    <ligand>
        <name>NAD(+)</name>
        <dbReference type="ChEBI" id="CHEBI:57540"/>
    </ligand>
</feature>
<feature type="binding site" evidence="1">
    <location>
        <position position="136"/>
    </location>
    <ligand>
        <name>NAD(+)</name>
        <dbReference type="ChEBI" id="CHEBI:57540"/>
    </ligand>
</feature>
<feature type="binding site" evidence="1">
    <location>
        <position position="159"/>
    </location>
    <ligand>
        <name>NAD(+)</name>
        <dbReference type="ChEBI" id="CHEBI:57540"/>
    </ligand>
</feature>
<feature type="binding site" evidence="1">
    <location>
        <position position="196"/>
    </location>
    <ligand>
        <name>NAD(+)</name>
        <dbReference type="ChEBI" id="CHEBI:57540"/>
    </ligand>
</feature>
<feature type="binding site" evidence="1">
    <location>
        <position position="312"/>
    </location>
    <ligand>
        <name>NAD(+)</name>
        <dbReference type="ChEBI" id="CHEBI:57540"/>
    </ligand>
</feature>
<feature type="binding site" evidence="1">
    <location>
        <position position="336"/>
    </location>
    <ligand>
        <name>NAD(+)</name>
        <dbReference type="ChEBI" id="CHEBI:57540"/>
    </ligand>
</feature>
<feature type="binding site" evidence="1">
    <location>
        <position position="429"/>
    </location>
    <ligand>
        <name>Zn(2+)</name>
        <dbReference type="ChEBI" id="CHEBI:29105"/>
    </ligand>
</feature>
<feature type="binding site" evidence="1">
    <location>
        <position position="432"/>
    </location>
    <ligand>
        <name>Zn(2+)</name>
        <dbReference type="ChEBI" id="CHEBI:29105"/>
    </ligand>
</feature>
<feature type="binding site" evidence="1">
    <location>
        <position position="453"/>
    </location>
    <ligand>
        <name>Zn(2+)</name>
        <dbReference type="ChEBI" id="CHEBI:29105"/>
    </ligand>
</feature>
<feature type="binding site" evidence="1">
    <location>
        <position position="459"/>
    </location>
    <ligand>
        <name>Zn(2+)</name>
        <dbReference type="ChEBI" id="CHEBI:29105"/>
    </ligand>
</feature>
<organism>
    <name type="scientific">Parvibaculum lavamentivorans (strain DS-1 / DSM 13023 / NCIMB 13966)</name>
    <dbReference type="NCBI Taxonomy" id="402881"/>
    <lineage>
        <taxon>Bacteria</taxon>
        <taxon>Pseudomonadati</taxon>
        <taxon>Pseudomonadota</taxon>
        <taxon>Alphaproteobacteria</taxon>
        <taxon>Hyphomicrobiales</taxon>
        <taxon>Parvibaculaceae</taxon>
        <taxon>Parvibaculum</taxon>
    </lineage>
</organism>
<gene>
    <name evidence="1" type="primary">ligA</name>
    <name type="ordered locus">Plav_2432</name>
</gene>
<sequence length="710" mass="78597">MSAKRKSFDEALAQKDVDHLTLEEAPEELERLAAEIEKHDKLYYQKDAPRISDAEYDTLRRRNEAIEARYPELVREDSPSHRVGAQPADGFGKVVHKVPMLSLSNAFDDEDVRDFALRIRRFLNLKEEDILPITAEPKIDGLSAALRYEKGKFVMGATRGDGREGENVTENLKTIGDIPAELKGKNIPDVVEVRGEVYMSHEDFAALNERQREAGKPVFANPRNAAAGSLRQLDAKITASRPLRFFAYTWGEMSDLPADTQSGVMDAFRKWGFTVNPLFGRCDTVEALIDFYHDIEERRATLGYDIDGVVYKVDRLDWQNRLGFVSRSPRWALAHKFPAEQAMTVLEKIEIQVGRTGALTPVARLTPVTVGGVVVSNATLHNADEIERLGVRPGDTVVVQRAGDVIPQIVRVVEDRPRGKKKFVFPDTCPECGSHAVREVNPKTGKLDAVARCTGGLVCPAQAVERLRHFVSRNAFDIEGLGEKQIAAFFEDGLIKKPDDIFTLAARDAKSLKKLKDREGWGATSARKLFDAIDARREVELDRFIFGLGIRHVGETNARLLARSYGTLDHFEEQMRAAADREDEAYAELLSIDGVGEVLAESIVDFFAEKHNREVLDGLREAGVKGVPLPKQETSSPVAGKTVVFTGSLEKMTRSEAKARAEQLGAKVAGSVSAKTDILVAGADAGSKLAKARELGIEILDEDQWIELAG</sequence>
<reference key="1">
    <citation type="journal article" date="2011" name="Stand. Genomic Sci.">
        <title>Complete genome sequence of Parvibaculum lavamentivorans type strain (DS-1(T)).</title>
        <authorList>
            <person name="Schleheck D."/>
            <person name="Weiss M."/>
            <person name="Pitluck S."/>
            <person name="Bruce D."/>
            <person name="Land M.L."/>
            <person name="Han S."/>
            <person name="Saunders E."/>
            <person name="Tapia R."/>
            <person name="Detter C."/>
            <person name="Brettin T."/>
            <person name="Han J."/>
            <person name="Woyke T."/>
            <person name="Goodwin L."/>
            <person name="Pennacchio L."/>
            <person name="Nolan M."/>
            <person name="Cook A.M."/>
            <person name="Kjelleberg S."/>
            <person name="Thomas T."/>
        </authorList>
    </citation>
    <scope>NUCLEOTIDE SEQUENCE [LARGE SCALE GENOMIC DNA]</scope>
    <source>
        <strain>DS-1 / DSM 13023 / NCIMB 13966</strain>
    </source>
</reference>
<keyword id="KW-0227">DNA damage</keyword>
<keyword id="KW-0234">DNA repair</keyword>
<keyword id="KW-0235">DNA replication</keyword>
<keyword id="KW-0436">Ligase</keyword>
<keyword id="KW-0460">Magnesium</keyword>
<keyword id="KW-0464">Manganese</keyword>
<keyword id="KW-0479">Metal-binding</keyword>
<keyword id="KW-0520">NAD</keyword>
<keyword id="KW-1185">Reference proteome</keyword>
<keyword id="KW-0862">Zinc</keyword>